<accession>O64811</accession>
<proteinExistence type="evidence at transcript level"/>
<dbReference type="EC" id="2.3.1.103"/>
<dbReference type="EMBL" id="AC004401">
    <property type="protein sequence ID" value="AAC17818.1"/>
    <property type="molecule type" value="Genomic_DNA"/>
</dbReference>
<dbReference type="EMBL" id="CP002685">
    <property type="protein sequence ID" value="AEC07397.1"/>
    <property type="molecule type" value="Genomic_DNA"/>
</dbReference>
<dbReference type="PIR" id="E84619">
    <property type="entry name" value="E84619"/>
</dbReference>
<dbReference type="RefSeq" id="NP_179884.1">
    <molecule id="O64811-1"/>
    <property type="nucleotide sequence ID" value="NM_127866.3"/>
</dbReference>
<dbReference type="SMR" id="O64811"/>
<dbReference type="FunCoup" id="O64811">
    <property type="interactions" value="931"/>
</dbReference>
<dbReference type="STRING" id="3702.O64811"/>
<dbReference type="ESTHER" id="arath-SCP9">
    <property type="family name" value="Carboxypeptidase_S10"/>
</dbReference>
<dbReference type="MEROPS" id="S10.A12"/>
<dbReference type="GlyCosmos" id="O64811">
    <property type="glycosylation" value="4 sites, No reported glycans"/>
</dbReference>
<dbReference type="GlyGen" id="O64811">
    <property type="glycosylation" value="4 sites"/>
</dbReference>
<dbReference type="PaxDb" id="3702-AT2G23010.1"/>
<dbReference type="ProteomicsDB" id="232750">
    <molecule id="O64811-1"/>
</dbReference>
<dbReference type="EnsemblPlants" id="AT2G23010.1">
    <molecule id="O64811-1"/>
    <property type="protein sequence ID" value="AT2G23010.1"/>
    <property type="gene ID" value="AT2G23010"/>
</dbReference>
<dbReference type="GeneID" id="816832"/>
<dbReference type="Gramene" id="AT2G23010.1">
    <molecule id="O64811-1"/>
    <property type="protein sequence ID" value="AT2G23010.1"/>
    <property type="gene ID" value="AT2G23010"/>
</dbReference>
<dbReference type="KEGG" id="ath:AT2G23010"/>
<dbReference type="Araport" id="AT2G23010"/>
<dbReference type="TAIR" id="AT2G23010">
    <property type="gene designation" value="SCPL9"/>
</dbReference>
<dbReference type="eggNOG" id="KOG1282">
    <property type="taxonomic scope" value="Eukaryota"/>
</dbReference>
<dbReference type="HOGENOM" id="CLU_008523_0_1_1"/>
<dbReference type="InParanoid" id="O64811"/>
<dbReference type="OMA" id="PNEYNGS"/>
<dbReference type="PhylomeDB" id="O64811"/>
<dbReference type="BioCyc" id="ARA:AT2G23010-MONOMER"/>
<dbReference type="BioCyc" id="MetaCyc:AT2G23010-MONOMER"/>
<dbReference type="PRO" id="PR:O64811"/>
<dbReference type="Proteomes" id="UP000006548">
    <property type="component" value="Chromosome 2"/>
</dbReference>
<dbReference type="ExpressionAtlas" id="O64811">
    <property type="expression patterns" value="baseline and differential"/>
</dbReference>
<dbReference type="GO" id="GO:0005576">
    <property type="term" value="C:extracellular region"/>
    <property type="evidence" value="ECO:0007669"/>
    <property type="project" value="UniProtKB-SubCell"/>
</dbReference>
<dbReference type="GO" id="GO:0004185">
    <property type="term" value="F:serine-type carboxypeptidase activity"/>
    <property type="evidence" value="ECO:0007669"/>
    <property type="project" value="InterPro"/>
</dbReference>
<dbReference type="GO" id="GO:0047158">
    <property type="term" value="F:sinapoylglucose-sinapoylglucose O-sinapoyltransferase activity"/>
    <property type="evidence" value="ECO:0007669"/>
    <property type="project" value="UniProtKB-EC"/>
</dbReference>
<dbReference type="GO" id="GO:0006508">
    <property type="term" value="P:proteolysis"/>
    <property type="evidence" value="ECO:0007669"/>
    <property type="project" value="InterPro"/>
</dbReference>
<dbReference type="FunFam" id="3.40.50.1820:FF:000148">
    <property type="entry name" value="Serine carboxypeptidase-like 11"/>
    <property type="match status" value="1"/>
</dbReference>
<dbReference type="Gene3D" id="3.40.50.1820">
    <property type="entry name" value="alpha/beta hydrolase"/>
    <property type="match status" value="1"/>
</dbReference>
<dbReference type="InterPro" id="IPR029058">
    <property type="entry name" value="AB_hydrolase_fold"/>
</dbReference>
<dbReference type="InterPro" id="IPR001563">
    <property type="entry name" value="Peptidase_S10"/>
</dbReference>
<dbReference type="PANTHER" id="PTHR11802:SF196">
    <property type="entry name" value="SERINE CARBOXYPEPTIDASE-LIKE 10-RELATED"/>
    <property type="match status" value="1"/>
</dbReference>
<dbReference type="PANTHER" id="PTHR11802">
    <property type="entry name" value="SERINE PROTEASE FAMILY S10 SERINE CARBOXYPEPTIDASE"/>
    <property type="match status" value="1"/>
</dbReference>
<dbReference type="Pfam" id="PF00450">
    <property type="entry name" value="Peptidase_S10"/>
    <property type="match status" value="1"/>
</dbReference>
<dbReference type="PRINTS" id="PR00724">
    <property type="entry name" value="CRBOXYPTASEC"/>
</dbReference>
<dbReference type="SUPFAM" id="SSF53474">
    <property type="entry name" value="alpha/beta-Hydrolases"/>
    <property type="match status" value="1"/>
</dbReference>
<keyword id="KW-0012">Acyltransferase</keyword>
<keyword id="KW-0025">Alternative splicing</keyword>
<keyword id="KW-1015">Disulfide bond</keyword>
<keyword id="KW-0325">Glycoprotein</keyword>
<keyword id="KW-1185">Reference proteome</keyword>
<keyword id="KW-0964">Secreted</keyword>
<keyword id="KW-0732">Signal</keyword>
<keyword id="KW-0808">Transferase</keyword>
<gene>
    <name type="primary">SCPL9</name>
    <name type="synonym">SST</name>
    <name type="ordered locus">At2g23010</name>
    <name type="ORF">F21P24.7</name>
</gene>
<feature type="signal peptide" evidence="2">
    <location>
        <begin position="1"/>
        <end position="21"/>
    </location>
</feature>
<feature type="chain" id="PRO_0000274623" description="Serine carboxypeptidase-like 9">
    <location>
        <begin position="22"/>
        <end position="437"/>
    </location>
</feature>
<feature type="active site" evidence="1">
    <location>
        <position position="175"/>
    </location>
</feature>
<feature type="active site" evidence="1">
    <location>
        <position position="362"/>
    </location>
</feature>
<feature type="active site" evidence="1">
    <location>
        <position position="415"/>
    </location>
</feature>
<feature type="glycosylation site" description="N-linked (GlcNAc...) asparagine" evidence="2">
    <location>
        <position position="101"/>
    </location>
</feature>
<feature type="glycosylation site" description="N-linked (GlcNAc...) asparagine" evidence="2">
    <location>
        <position position="307"/>
    </location>
</feature>
<feature type="glycosylation site" description="N-linked (GlcNAc...) asparagine" evidence="2">
    <location>
        <position position="346"/>
    </location>
</feature>
<feature type="glycosylation site" description="N-linked (GlcNAc...) asparagine" evidence="2">
    <location>
        <position position="378"/>
    </location>
</feature>
<feature type="disulfide bond" evidence="1">
    <location>
        <begin position="243"/>
        <end position="257"/>
    </location>
</feature>
<feature type="disulfide bond" evidence="1">
    <location>
        <begin position="281"/>
        <end position="293"/>
    </location>
</feature>
<protein>
    <recommendedName>
        <fullName>Serine carboxypeptidase-like 9</fullName>
    </recommendedName>
    <alternativeName>
        <fullName>Sinapoylglucose--sinapoylglucose O-sinapoyltransferase</fullName>
        <shortName>SST</shortName>
        <ecNumber>2.3.1.103</ecNumber>
    </alternativeName>
    <alternativeName>
        <fullName>Sinapoylglucose--sinapoylglucose acyltransferase</fullName>
    </alternativeName>
</protein>
<evidence type="ECO:0000250" key="1"/>
<evidence type="ECO:0000255" key="2"/>
<evidence type="ECO:0000269" key="3">
    <source>
    </source>
</evidence>
<evidence type="ECO:0000269" key="4">
    <source>
    </source>
</evidence>
<evidence type="ECO:0000305" key="5"/>
<evidence type="ECO:0000305" key="6">
    <source>
    </source>
</evidence>
<evidence type="ECO:0000305" key="7">
    <source>
    </source>
</evidence>
<comment type="function">
    <text evidence="4">Catalyzes the formation of 1,2-bis-O-sinapoyl beta-D-glucoside and an unidentified compound 1.</text>
</comment>
<comment type="catalytic activity">
    <reaction>
        <text>2 1-O-(trans-sinapoyl)-beta-D-glucose = 1,2-di-O-sinapoyl beta-D-glucose + D-glucose</text>
        <dbReference type="Rhea" id="RHEA:22664"/>
        <dbReference type="ChEBI" id="CHEBI:4167"/>
        <dbReference type="ChEBI" id="CHEBI:16546"/>
        <dbReference type="ChEBI" id="CHEBI:27993"/>
        <dbReference type="EC" id="2.3.1.103"/>
    </reaction>
</comment>
<comment type="subcellular location">
    <subcellularLocation>
        <location evidence="5">Secreted</location>
    </subcellularLocation>
</comment>
<comment type="alternative products">
    <event type="alternative splicing"/>
    <isoform>
        <id>O64811-1</id>
        <name>1</name>
        <sequence type="displayed"/>
    </isoform>
    <text>A number of isoforms are produced. According to EST sequences.</text>
</comment>
<comment type="tissue specificity">
    <text evidence="3">Expressed in seedlings, leaves, flowers and siliques.</text>
</comment>
<comment type="disruption phenotype">
    <text evidence="4">Decreased levels of 1,2-disinapoyl-glucose due to a partial redundancy with SCPL8 and SCPL13.</text>
</comment>
<comment type="similarity">
    <text evidence="5">Belongs to the peptidase S10 family.</text>
</comment>
<comment type="caution">
    <text evidence="6 7">Was classified as a serine carboxypeptidase-like (SCPL) protein solely on the basis of the overall sequence similarity (PubMed:15908604) but it has been shown that it belongs to a class of enzymes that catalyze acyltransferase reactions (PubMed:17600138).</text>
</comment>
<name>SCP9_ARATH</name>
<organism>
    <name type="scientific">Arabidopsis thaliana</name>
    <name type="common">Mouse-ear cress</name>
    <dbReference type="NCBI Taxonomy" id="3702"/>
    <lineage>
        <taxon>Eukaryota</taxon>
        <taxon>Viridiplantae</taxon>
        <taxon>Streptophyta</taxon>
        <taxon>Embryophyta</taxon>
        <taxon>Tracheophyta</taxon>
        <taxon>Spermatophyta</taxon>
        <taxon>Magnoliopsida</taxon>
        <taxon>eudicotyledons</taxon>
        <taxon>Gunneridae</taxon>
        <taxon>Pentapetalae</taxon>
        <taxon>rosids</taxon>
        <taxon>malvids</taxon>
        <taxon>Brassicales</taxon>
        <taxon>Brassicaceae</taxon>
        <taxon>Camelineae</taxon>
        <taxon>Arabidopsis</taxon>
    </lineage>
</organism>
<reference key="1">
    <citation type="journal article" date="1999" name="Nature">
        <title>Sequence and analysis of chromosome 2 of the plant Arabidopsis thaliana.</title>
        <authorList>
            <person name="Lin X."/>
            <person name="Kaul S."/>
            <person name="Rounsley S.D."/>
            <person name="Shea T.P."/>
            <person name="Benito M.-I."/>
            <person name="Town C.D."/>
            <person name="Fujii C.Y."/>
            <person name="Mason T.M."/>
            <person name="Bowman C.L."/>
            <person name="Barnstead M.E."/>
            <person name="Feldblyum T.V."/>
            <person name="Buell C.R."/>
            <person name="Ketchum K.A."/>
            <person name="Lee J.J."/>
            <person name="Ronning C.M."/>
            <person name="Koo H.L."/>
            <person name="Moffat K.S."/>
            <person name="Cronin L.A."/>
            <person name="Shen M."/>
            <person name="Pai G."/>
            <person name="Van Aken S."/>
            <person name="Umayam L."/>
            <person name="Tallon L.J."/>
            <person name="Gill J.E."/>
            <person name="Adams M.D."/>
            <person name="Carrera A.J."/>
            <person name="Creasy T.H."/>
            <person name="Goodman H.M."/>
            <person name="Somerville C.R."/>
            <person name="Copenhaver G.P."/>
            <person name="Preuss D."/>
            <person name="Nierman W.C."/>
            <person name="White O."/>
            <person name="Eisen J.A."/>
            <person name="Salzberg S.L."/>
            <person name="Fraser C.M."/>
            <person name="Venter J.C."/>
        </authorList>
    </citation>
    <scope>NUCLEOTIDE SEQUENCE [LARGE SCALE GENOMIC DNA]</scope>
    <source>
        <strain>cv. Columbia</strain>
    </source>
</reference>
<reference key="2">
    <citation type="journal article" date="2017" name="Plant J.">
        <title>Araport11: a complete reannotation of the Arabidopsis thaliana reference genome.</title>
        <authorList>
            <person name="Cheng C.Y."/>
            <person name="Krishnakumar V."/>
            <person name="Chan A.P."/>
            <person name="Thibaud-Nissen F."/>
            <person name="Schobel S."/>
            <person name="Town C.D."/>
        </authorList>
    </citation>
    <scope>GENOME REANNOTATION</scope>
    <source>
        <strain>cv. Columbia</strain>
    </source>
</reference>
<reference key="3">
    <citation type="journal article" date="2005" name="Plant Physiol.">
        <title>An expression and bioinformatics analysis of the Arabidopsis serine carboxypeptidase-like gene family.</title>
        <authorList>
            <person name="Fraser C.M."/>
            <person name="Rider L.W."/>
            <person name="Chapple C."/>
        </authorList>
    </citation>
    <scope>GENE FAMILY</scope>
    <scope>TISSUE SPECIFICITY</scope>
    <scope>NOMENCLATURE</scope>
</reference>
<reference key="4">
    <citation type="journal article" date="2007" name="Plant Physiol.">
        <title>Related Arabidopsis serine carboxypeptidase-like sinapoylglucose acyltransferases display distinct but overlapping substrate specificities.</title>
        <authorList>
            <person name="Fraser C.M."/>
            <person name="Thompson M.G."/>
            <person name="Shirley A.M."/>
            <person name="Ralph J."/>
            <person name="Schoenherr J.A."/>
            <person name="Sinlapadech T."/>
            <person name="Hall M.C."/>
            <person name="Chapple C."/>
        </authorList>
    </citation>
    <scope>FUNCTION</scope>
    <scope>DISRUPTION PHENOTYPE</scope>
</reference>
<sequence length="437" mass="49756">MSLILKFMLLILLVSSHHVRSGSIVKFLPGFKGPLPFELETGYIGIGEEENVQFFYYFIKSDKNPQEDPLIIWLNGGPGCSCLSGLFFENGPLALKNKVYNGSVPSLVSTTYSWTKTANIIFLDQPVGSGFSYSKTPIERTSDTSEVKKIHEFLQKWLIKHPQFLSNPFYVVGDSYSGMIVPALVHEISKGNYICCNPPINLQGYVLGNPITHIEFEQNFRIPYAHGMSLISDELYESLKRICKGNYFSVDPSNKKCLKLVEEYHKCTDNINSHHTLIANCDDSNTQHISPDCYYYPYHLVECWANNESVREALHVDKGSIGEWIRDHRGIPYKSDIRSSIPYHMNNSINGYRSLIFSGDHDITMPFQATQAWIKSLNYSIIDDWRPWMIKGQIAGYTRTYSNKMTFATVKGGGHTAEYLPEESSIMFQRWISGQPL</sequence>